<proteinExistence type="evidence at protein level"/>
<reference key="1">
    <citation type="journal article" date="1999" name="Nature">
        <title>Sequence and analysis of chromosome 2 of the plant Arabidopsis thaliana.</title>
        <authorList>
            <person name="Lin X."/>
            <person name="Kaul S."/>
            <person name="Rounsley S.D."/>
            <person name="Shea T.P."/>
            <person name="Benito M.-I."/>
            <person name="Town C.D."/>
            <person name="Fujii C.Y."/>
            <person name="Mason T.M."/>
            <person name="Bowman C.L."/>
            <person name="Barnstead M.E."/>
            <person name="Feldblyum T.V."/>
            <person name="Buell C.R."/>
            <person name="Ketchum K.A."/>
            <person name="Lee J.J."/>
            <person name="Ronning C.M."/>
            <person name="Koo H.L."/>
            <person name="Moffat K.S."/>
            <person name="Cronin L.A."/>
            <person name="Shen M."/>
            <person name="Pai G."/>
            <person name="Van Aken S."/>
            <person name="Umayam L."/>
            <person name="Tallon L.J."/>
            <person name="Gill J.E."/>
            <person name="Adams M.D."/>
            <person name="Carrera A.J."/>
            <person name="Creasy T.H."/>
            <person name="Goodman H.M."/>
            <person name="Somerville C.R."/>
            <person name="Copenhaver G.P."/>
            <person name="Preuss D."/>
            <person name="Nierman W.C."/>
            <person name="White O."/>
            <person name="Eisen J.A."/>
            <person name="Salzberg S.L."/>
            <person name="Fraser C.M."/>
            <person name="Venter J.C."/>
        </authorList>
    </citation>
    <scope>NUCLEOTIDE SEQUENCE [LARGE SCALE GENOMIC DNA]</scope>
    <source>
        <strain>cv. Columbia</strain>
    </source>
</reference>
<reference key="2">
    <citation type="journal article" date="2017" name="Plant J.">
        <title>Araport11: a complete reannotation of the Arabidopsis thaliana reference genome.</title>
        <authorList>
            <person name="Cheng C.Y."/>
            <person name="Krishnakumar V."/>
            <person name="Chan A.P."/>
            <person name="Thibaud-Nissen F."/>
            <person name="Schobel S."/>
            <person name="Town C.D."/>
        </authorList>
    </citation>
    <scope>GENOME REANNOTATION</scope>
    <source>
        <strain>cv. Columbia</strain>
    </source>
</reference>
<reference key="3">
    <citation type="journal article" date="2003" name="Science">
        <title>Empirical analysis of transcriptional activity in the Arabidopsis genome.</title>
        <authorList>
            <person name="Yamada K."/>
            <person name="Lim J."/>
            <person name="Dale J.M."/>
            <person name="Chen H."/>
            <person name="Shinn P."/>
            <person name="Palm C.J."/>
            <person name="Southwick A.M."/>
            <person name="Wu H.C."/>
            <person name="Kim C.J."/>
            <person name="Nguyen M."/>
            <person name="Pham P.K."/>
            <person name="Cheuk R.F."/>
            <person name="Karlin-Newmann G."/>
            <person name="Liu S.X."/>
            <person name="Lam B."/>
            <person name="Sakano H."/>
            <person name="Wu T."/>
            <person name="Yu G."/>
            <person name="Miranda M."/>
            <person name="Quach H.L."/>
            <person name="Tripp M."/>
            <person name="Chang C.H."/>
            <person name="Lee J.M."/>
            <person name="Toriumi M.J."/>
            <person name="Chan M.M."/>
            <person name="Tang C.C."/>
            <person name="Onodera C.S."/>
            <person name="Deng J.M."/>
            <person name="Akiyama K."/>
            <person name="Ansari Y."/>
            <person name="Arakawa T."/>
            <person name="Banh J."/>
            <person name="Banno F."/>
            <person name="Bowser L."/>
            <person name="Brooks S.Y."/>
            <person name="Carninci P."/>
            <person name="Chao Q."/>
            <person name="Choy N."/>
            <person name="Enju A."/>
            <person name="Goldsmith A.D."/>
            <person name="Gurjal M."/>
            <person name="Hansen N.F."/>
            <person name="Hayashizaki Y."/>
            <person name="Johnson-Hopson C."/>
            <person name="Hsuan V.W."/>
            <person name="Iida K."/>
            <person name="Karnes M."/>
            <person name="Khan S."/>
            <person name="Koesema E."/>
            <person name="Ishida J."/>
            <person name="Jiang P.X."/>
            <person name="Jones T."/>
            <person name="Kawai J."/>
            <person name="Kamiya A."/>
            <person name="Meyers C."/>
            <person name="Nakajima M."/>
            <person name="Narusaka M."/>
            <person name="Seki M."/>
            <person name="Sakurai T."/>
            <person name="Satou M."/>
            <person name="Tamse R."/>
            <person name="Vaysberg M."/>
            <person name="Wallender E.K."/>
            <person name="Wong C."/>
            <person name="Yamamura Y."/>
            <person name="Yuan S."/>
            <person name="Shinozaki K."/>
            <person name="Davis R.W."/>
            <person name="Theologis A."/>
            <person name="Ecker J.R."/>
        </authorList>
    </citation>
    <scope>NUCLEOTIDE SEQUENCE [LARGE SCALE MRNA] (ISOFORM 1)</scope>
    <source>
        <strain>cv. Columbia</strain>
    </source>
</reference>
<reference key="4">
    <citation type="submission" date="2004-09" db="EMBL/GenBank/DDBJ databases">
        <title>Large-scale analysis of RIKEN Arabidopsis full-length (RAFL) cDNAs.</title>
        <authorList>
            <person name="Totoki Y."/>
            <person name="Seki M."/>
            <person name="Ishida J."/>
            <person name="Nakajima M."/>
            <person name="Enju A."/>
            <person name="Kamiya A."/>
            <person name="Narusaka M."/>
            <person name="Shin-i T."/>
            <person name="Nakagawa M."/>
            <person name="Sakamoto N."/>
            <person name="Oishi K."/>
            <person name="Kohara Y."/>
            <person name="Kobayashi M."/>
            <person name="Toyoda A."/>
            <person name="Sakaki Y."/>
            <person name="Sakurai T."/>
            <person name="Iida K."/>
            <person name="Akiyama K."/>
            <person name="Satou M."/>
            <person name="Toyoda T."/>
            <person name="Konagaya A."/>
            <person name="Carninci P."/>
            <person name="Kawai J."/>
            <person name="Hayashizaki Y."/>
            <person name="Shinozaki K."/>
        </authorList>
    </citation>
    <scope>NUCLEOTIDE SEQUENCE [LARGE SCALE MRNA] (ISOFORMS 1 AND 2)</scope>
    <source>
        <strain>cv. Columbia</strain>
    </source>
</reference>
<reference key="5">
    <citation type="journal article" date="2006" name="Plant Physiol.">
        <title>A cytosolic Arabidopsis D-xylulose kinase catalyzes the phosphorylation of 1-deoxy-D-xylulose into a precursor of the plastidial isoprenoid pathway.</title>
        <authorList>
            <person name="Hemmerlin A."/>
            <person name="Tritsch D."/>
            <person name="Hartmann M."/>
            <person name="Pacaud K."/>
            <person name="Hoeffler J.F."/>
            <person name="van Dorsselaer A."/>
            <person name="Rohmer M."/>
            <person name="Bach T.J."/>
        </authorList>
    </citation>
    <scope>SUBCELLULAR LOCATION</scope>
    <source>
        <strain>cv. Columbia</strain>
    </source>
</reference>
<reference key="6">
    <citation type="journal article" date="2016" name="PLoS ONE">
        <title>Crystal structures of putative sugar kinases from Synechococcus elongatus PCC 7942 and Arabidopsis thaliana.</title>
        <authorList>
            <person name="Xie Y."/>
            <person name="Li M."/>
            <person name="Chang W."/>
        </authorList>
    </citation>
    <scope>X-RAY CRYSTALLOGRAPHY (1.49 ANGSTROMS) OF 43-478 IN COMPLEX WITH ADP AND ATP ANALOG</scope>
    <scope>FUNCTION</scope>
</reference>
<name>XK1_ARATH</name>
<dbReference type="EC" id="2.7.1.47" evidence="5"/>
<dbReference type="EMBL" id="AC006841">
    <property type="protein sequence ID" value="AAD23698.1"/>
    <property type="status" value="ALT_SEQ"/>
    <property type="molecule type" value="Genomic_DNA"/>
</dbReference>
<dbReference type="EMBL" id="CP002685">
    <property type="protein sequence ID" value="AEC07166.1"/>
    <property type="molecule type" value="Genomic_DNA"/>
</dbReference>
<dbReference type="EMBL" id="CP002685">
    <property type="protein sequence ID" value="AEC07167.1"/>
    <property type="molecule type" value="Genomic_DNA"/>
</dbReference>
<dbReference type="EMBL" id="AY136397">
    <property type="protein sequence ID" value="AAM97063.1"/>
    <property type="molecule type" value="mRNA"/>
</dbReference>
<dbReference type="EMBL" id="BT000210">
    <property type="protein sequence ID" value="AAN15529.1"/>
    <property type="molecule type" value="mRNA"/>
</dbReference>
<dbReference type="EMBL" id="AK175657">
    <property type="protein sequence ID" value="BAD43420.1"/>
    <property type="molecule type" value="mRNA"/>
</dbReference>
<dbReference type="EMBL" id="AK176783">
    <property type="protein sequence ID" value="BAD44546.1"/>
    <property type="molecule type" value="mRNA"/>
</dbReference>
<dbReference type="PIR" id="D84600">
    <property type="entry name" value="D84600"/>
</dbReference>
<dbReference type="RefSeq" id="NP_179732.2">
    <molecule id="Q8L794-1"/>
    <property type="nucleotide sequence ID" value="NM_127708.3"/>
</dbReference>
<dbReference type="RefSeq" id="NP_973505.1">
    <molecule id="Q8L794-2"/>
    <property type="nucleotide sequence ID" value="NM_201776.3"/>
</dbReference>
<dbReference type="PDB" id="5HTR">
    <property type="method" value="X-ray"/>
    <property type="resolution" value="2.00 A"/>
    <property type="chains" value="A=43-478"/>
</dbReference>
<dbReference type="PDB" id="5HTV">
    <property type="method" value="X-ray"/>
    <property type="resolution" value="1.78 A"/>
    <property type="chains" value="A=43-478"/>
</dbReference>
<dbReference type="PDB" id="5HTX">
    <property type="method" value="X-ray"/>
    <property type="resolution" value="1.49 A"/>
    <property type="chains" value="A=43-478"/>
</dbReference>
<dbReference type="PDBsum" id="5HTR"/>
<dbReference type="PDBsum" id="5HTV"/>
<dbReference type="PDBsum" id="5HTX"/>
<dbReference type="SMR" id="Q8L794"/>
<dbReference type="FunCoup" id="Q8L794">
    <property type="interactions" value="990"/>
</dbReference>
<dbReference type="STRING" id="3702.Q8L794"/>
<dbReference type="iPTMnet" id="Q8L794"/>
<dbReference type="PaxDb" id="3702-AT2G21370.1"/>
<dbReference type="ProteomicsDB" id="242525">
    <molecule id="Q8L794-1"/>
</dbReference>
<dbReference type="EnsemblPlants" id="AT2G21370.1">
    <molecule id="Q8L794-1"/>
    <property type="protein sequence ID" value="AT2G21370.1"/>
    <property type="gene ID" value="AT2G21370"/>
</dbReference>
<dbReference type="EnsemblPlants" id="AT2G21370.2">
    <molecule id="Q8L794-2"/>
    <property type="protein sequence ID" value="AT2G21370.2"/>
    <property type="gene ID" value="AT2G21370"/>
</dbReference>
<dbReference type="GeneID" id="816675"/>
<dbReference type="Gramene" id="AT2G21370.1">
    <molecule id="Q8L794-1"/>
    <property type="protein sequence ID" value="AT2G21370.1"/>
    <property type="gene ID" value="AT2G21370"/>
</dbReference>
<dbReference type="Gramene" id="AT2G21370.2">
    <molecule id="Q8L794-2"/>
    <property type="protein sequence ID" value="AT2G21370.2"/>
    <property type="gene ID" value="AT2G21370"/>
</dbReference>
<dbReference type="KEGG" id="ath:AT2G21370"/>
<dbReference type="Araport" id="AT2G21370"/>
<dbReference type="TAIR" id="AT2G21370">
    <property type="gene designation" value="XK-1"/>
</dbReference>
<dbReference type="eggNOG" id="ENOG502QVMB">
    <property type="taxonomic scope" value="Eukaryota"/>
</dbReference>
<dbReference type="InParanoid" id="Q8L794"/>
<dbReference type="OMA" id="FLHQADW"/>
<dbReference type="PhylomeDB" id="Q8L794"/>
<dbReference type="PRO" id="PR:Q8L794"/>
<dbReference type="Proteomes" id="UP000006548">
    <property type="component" value="Chromosome 2"/>
</dbReference>
<dbReference type="ExpressionAtlas" id="Q8L794">
    <property type="expression patterns" value="baseline and differential"/>
</dbReference>
<dbReference type="GO" id="GO:0009507">
    <property type="term" value="C:chloroplast"/>
    <property type="evidence" value="ECO:0007005"/>
    <property type="project" value="TAIR"/>
</dbReference>
<dbReference type="GO" id="GO:0005737">
    <property type="term" value="C:cytoplasm"/>
    <property type="evidence" value="ECO:0007005"/>
    <property type="project" value="TAIR"/>
</dbReference>
<dbReference type="GO" id="GO:0005829">
    <property type="term" value="C:cytosol"/>
    <property type="evidence" value="ECO:0007005"/>
    <property type="project" value="TAIR"/>
</dbReference>
<dbReference type="GO" id="GO:0009536">
    <property type="term" value="C:plastid"/>
    <property type="evidence" value="ECO:0000314"/>
    <property type="project" value="TAIR"/>
</dbReference>
<dbReference type="GO" id="GO:0005524">
    <property type="term" value="F:ATP binding"/>
    <property type="evidence" value="ECO:0000314"/>
    <property type="project" value="UniProtKB"/>
</dbReference>
<dbReference type="GO" id="GO:0019150">
    <property type="term" value="F:D-ribulokinase activity"/>
    <property type="evidence" value="ECO:0000314"/>
    <property type="project" value="UniProtKB"/>
</dbReference>
<dbReference type="CDD" id="cd07783">
    <property type="entry name" value="ASKHA_NBD_FGGY_SePSK_AtXK1-like"/>
    <property type="match status" value="1"/>
</dbReference>
<dbReference type="FunFam" id="3.30.420.40:FF:000220">
    <property type="entry name" value="D-ribulose kinase"/>
    <property type="match status" value="1"/>
</dbReference>
<dbReference type="FunFam" id="3.30.420.40:FF:000180">
    <property type="entry name" value="D-ribulose kinase isoform X1"/>
    <property type="match status" value="1"/>
</dbReference>
<dbReference type="Gene3D" id="3.30.420.40">
    <property type="match status" value="2"/>
</dbReference>
<dbReference type="InterPro" id="IPR043129">
    <property type="entry name" value="ATPase_NBD"/>
</dbReference>
<dbReference type="InterPro" id="IPR018485">
    <property type="entry name" value="FGGY_C"/>
</dbReference>
<dbReference type="InterPro" id="IPR018484">
    <property type="entry name" value="FGGY_N"/>
</dbReference>
<dbReference type="PANTHER" id="PTHR10196:SF80">
    <property type="entry name" value="D-RIBULOSE KINASE"/>
    <property type="match status" value="1"/>
</dbReference>
<dbReference type="PANTHER" id="PTHR10196">
    <property type="entry name" value="SUGAR KINASE"/>
    <property type="match status" value="1"/>
</dbReference>
<dbReference type="Pfam" id="PF02782">
    <property type="entry name" value="FGGY_C"/>
    <property type="match status" value="1"/>
</dbReference>
<dbReference type="Pfam" id="PF00370">
    <property type="entry name" value="FGGY_N"/>
    <property type="match status" value="1"/>
</dbReference>
<dbReference type="SUPFAM" id="SSF53067">
    <property type="entry name" value="Actin-like ATPase domain"/>
    <property type="match status" value="2"/>
</dbReference>
<keyword id="KW-0002">3D-structure</keyword>
<keyword id="KW-0025">Alternative splicing</keyword>
<keyword id="KW-0067">ATP-binding</keyword>
<keyword id="KW-0150">Chloroplast</keyword>
<keyword id="KW-0418">Kinase</keyword>
<keyword id="KW-0547">Nucleotide-binding</keyword>
<keyword id="KW-0934">Plastid</keyword>
<keyword id="KW-1185">Reference proteome</keyword>
<keyword id="KW-0808">Transferase</keyword>
<keyword id="KW-0809">Transit peptide</keyword>
<comment type="function">
    <text evidence="5">Exhibits ATP hydrolysis without substrate. Can phosphorylate D-ribulose with low efficiency.</text>
</comment>
<comment type="catalytic activity">
    <reaction evidence="5">
        <text>D-ribulose + ATP = D-ribulose 5-phosphate + ADP + H(+)</text>
        <dbReference type="Rhea" id="RHEA:17601"/>
        <dbReference type="ChEBI" id="CHEBI:15378"/>
        <dbReference type="ChEBI" id="CHEBI:17173"/>
        <dbReference type="ChEBI" id="CHEBI:30616"/>
        <dbReference type="ChEBI" id="CHEBI:58121"/>
        <dbReference type="ChEBI" id="CHEBI:456216"/>
        <dbReference type="EC" id="2.7.1.47"/>
    </reaction>
</comment>
<comment type="cofactor">
    <cofactor evidence="1">
        <name>a divalent metal cation</name>
        <dbReference type="ChEBI" id="CHEBI:60240"/>
    </cofactor>
</comment>
<comment type="subcellular location">
    <subcellularLocation>
        <location evidence="4">Plastid</location>
        <location evidence="4">Chloroplast</location>
    </subcellularLocation>
</comment>
<comment type="alternative products">
    <event type="alternative splicing"/>
    <isoform>
        <id>Q8L794-1</id>
        <name>1</name>
        <sequence type="displayed"/>
    </isoform>
    <isoform>
        <id>Q8L794-2</id>
        <name>2</name>
        <sequence type="described" ref="VSP_059328"/>
    </isoform>
</comment>
<comment type="similarity">
    <text evidence="7">Belongs to the FGGY kinase family.</text>
</comment>
<comment type="sequence caution" evidence="7">
    <conflict type="erroneous gene model prediction">
        <sequence resource="EMBL-CDS" id="AAD23698"/>
    </conflict>
</comment>
<sequence length="478" mass="52468">MLILRQFQISSFELFQSPKQTGFYSSSRSVPLPRTRFYSDFRVMSGNKGTNYEKLYLGMDFGTSGGRFTVIDEQGEIKAQGKREYPPFMKEESMGWASSWKATLFSLLEDIPVTVRSLVSSISLDGTSATTLILNSESGEVLCQPYLYNQSCPDALPEVKSIAPANHTVCSGTSTLCKLVSWWNTEVPNRESAVLLHQADWLLWLLHGRLGVSDYNNALKVGYDPESESYPSWLLGQPYSQLLPKVQAPGTSIGNLKESFTRQFGFPDDCIVCTGTTDSIAAFLAARATEPGKAVTSLGSTLAIKLLSTKRVDDARYGVYSHRLDDKWLVGGASNTGGAILRQLFSDEQLERLSQEINPMVGSPLDYYPLQSSGERFPIADPNLAPRLLPRPESDVEFLHGILESIARIEGKGYKLLKELGATEAEEVLTAGGGAKNDKWIKIRQRVLGLPVKKAVHTEASYGASLLALKGAKQNSGL</sequence>
<accession>Q8L794</accession>
<accession>Q67XN5</accession>
<accession>Q9SJU1</accession>
<feature type="transit peptide" description="Chloroplast" evidence="3">
    <location>
        <begin position="1"/>
        <end position="38"/>
    </location>
</feature>
<feature type="chain" id="PRO_0000443299" description="D-ribulose kinase">
    <location>
        <begin position="39"/>
        <end position="478"/>
    </location>
</feature>
<feature type="binding site" evidence="2">
    <location>
        <position position="60"/>
    </location>
    <ligand>
        <name>substrate</name>
    </ligand>
</feature>
<feature type="binding site" evidence="2">
    <location>
        <begin position="64"/>
        <end position="67"/>
    </location>
    <ligand>
        <name>substrate</name>
    </ligand>
</feature>
<feature type="binding site" evidence="2">
    <location>
        <position position="278"/>
    </location>
    <ligand>
        <name>substrate</name>
    </ligand>
</feature>
<feature type="binding site" evidence="5 11 12">
    <location>
        <position position="300"/>
    </location>
    <ligand>
        <name>ATP</name>
        <dbReference type="ChEBI" id="CHEBI:30616"/>
    </ligand>
</feature>
<feature type="binding site" evidence="5 11 12">
    <location>
        <position position="338"/>
    </location>
    <ligand>
        <name>ATP</name>
        <dbReference type="ChEBI" id="CHEBI:30616"/>
    </ligand>
</feature>
<feature type="binding site" evidence="5 11 12">
    <location>
        <begin position="433"/>
        <end position="437"/>
    </location>
    <ligand>
        <name>ATP</name>
        <dbReference type="ChEBI" id="CHEBI:30616"/>
    </ligand>
</feature>
<feature type="splice variant" id="VSP_059328" description="In isoform 2.">
    <location>
        <begin position="1"/>
        <end position="93"/>
    </location>
</feature>
<feature type="strand" evidence="13">
    <location>
        <begin position="55"/>
        <end position="61"/>
    </location>
</feature>
<feature type="strand" evidence="13">
    <location>
        <begin position="63"/>
        <end position="71"/>
    </location>
</feature>
<feature type="strand" evidence="13">
    <location>
        <begin position="77"/>
        <end position="84"/>
    </location>
</feature>
<feature type="turn" evidence="13">
    <location>
        <begin position="93"/>
        <end position="95"/>
    </location>
</feature>
<feature type="helix" evidence="13">
    <location>
        <begin position="96"/>
        <end position="110"/>
    </location>
</feature>
<feature type="helix" evidence="13">
    <location>
        <begin position="113"/>
        <end position="116"/>
    </location>
</feature>
<feature type="strand" evidence="13">
    <location>
        <begin position="119"/>
        <end position="126"/>
    </location>
</feature>
<feature type="strand" evidence="13">
    <location>
        <begin position="131"/>
        <end position="135"/>
    </location>
</feature>
<feature type="turn" evidence="13">
    <location>
        <begin position="136"/>
        <end position="138"/>
    </location>
</feature>
<feature type="helix" evidence="13">
    <location>
        <begin position="153"/>
        <end position="155"/>
    </location>
</feature>
<feature type="helix" evidence="13">
    <location>
        <begin position="156"/>
        <end position="162"/>
    </location>
</feature>
<feature type="helix" evidence="13">
    <location>
        <begin position="175"/>
        <end position="184"/>
    </location>
</feature>
<feature type="helix" evidence="13">
    <location>
        <begin position="190"/>
        <end position="192"/>
    </location>
</feature>
<feature type="strand" evidence="13">
    <location>
        <begin position="193"/>
        <end position="197"/>
    </location>
</feature>
<feature type="helix" evidence="13">
    <location>
        <begin position="198"/>
        <end position="207"/>
    </location>
</feature>
<feature type="strand" evidence="13">
    <location>
        <begin position="211"/>
        <end position="214"/>
    </location>
</feature>
<feature type="turn" evidence="13">
    <location>
        <begin position="215"/>
        <end position="218"/>
    </location>
</feature>
<feature type="helix" evidence="13">
    <location>
        <begin position="219"/>
        <end position="221"/>
    </location>
</feature>
<feature type="turn" evidence="13">
    <location>
        <begin position="225"/>
        <end position="228"/>
    </location>
</feature>
<feature type="helix" evidence="13">
    <location>
        <begin position="232"/>
        <end position="235"/>
    </location>
</feature>
<feature type="helix" evidence="13">
    <location>
        <begin position="238"/>
        <end position="242"/>
    </location>
</feature>
<feature type="strand" evidence="13">
    <location>
        <begin position="245"/>
        <end position="247"/>
    </location>
</feature>
<feature type="strand" evidence="13">
    <location>
        <begin position="252"/>
        <end position="255"/>
    </location>
</feature>
<feature type="helix" evidence="13">
    <location>
        <begin position="258"/>
        <end position="264"/>
    </location>
</feature>
<feature type="strand" evidence="13">
    <location>
        <begin position="271"/>
        <end position="273"/>
    </location>
</feature>
<feature type="helix" evidence="13">
    <location>
        <begin position="278"/>
        <end position="285"/>
    </location>
</feature>
<feature type="strand" evidence="13">
    <location>
        <begin position="293"/>
        <end position="310"/>
    </location>
</feature>
<feature type="helix" evidence="13">
    <location>
        <begin position="315"/>
        <end position="317"/>
    </location>
</feature>
<feature type="strand" evidence="13">
    <location>
        <begin position="319"/>
        <end position="324"/>
    </location>
</feature>
<feature type="strand" evidence="13">
    <location>
        <begin position="327"/>
        <end position="335"/>
    </location>
</feature>
<feature type="helix" evidence="13">
    <location>
        <begin position="338"/>
        <end position="344"/>
    </location>
</feature>
<feature type="helix" evidence="13">
    <location>
        <begin position="347"/>
        <end position="355"/>
    </location>
</feature>
<feature type="strand" evidence="13">
    <location>
        <begin position="371"/>
        <end position="373"/>
    </location>
</feature>
<feature type="strand" evidence="13">
    <location>
        <begin position="377"/>
        <end position="379"/>
    </location>
</feature>
<feature type="helix" evidence="13">
    <location>
        <begin position="395"/>
        <end position="419"/>
    </location>
</feature>
<feature type="strand" evidence="13">
    <location>
        <begin position="427"/>
        <end position="432"/>
    </location>
</feature>
<feature type="helix" evidence="13">
    <location>
        <begin position="433"/>
        <end position="436"/>
    </location>
</feature>
<feature type="helix" evidence="13">
    <location>
        <begin position="438"/>
        <end position="448"/>
    </location>
</feature>
<feature type="strand" evidence="13">
    <location>
        <begin position="452"/>
        <end position="454"/>
    </location>
</feature>
<feature type="helix" evidence="13">
    <location>
        <begin position="460"/>
        <end position="475"/>
    </location>
</feature>
<protein>
    <recommendedName>
        <fullName evidence="8">D-ribulose kinase</fullName>
        <shortName evidence="7">D-ribulokinase</shortName>
        <ecNumber evidence="5">2.7.1.47</ecNumber>
    </recommendedName>
    <alternativeName>
        <fullName evidence="6">Inactive Xylulose kinase 1</fullName>
        <shortName evidence="6">Atxk-1</shortName>
    </alternativeName>
</protein>
<evidence type="ECO:0000250" key="1">
    <source>
        <dbReference type="UniProtKB" id="P11553"/>
    </source>
</evidence>
<evidence type="ECO:0000250" key="2">
    <source>
        <dbReference type="UniProtKB" id="Q31KC7"/>
    </source>
</evidence>
<evidence type="ECO:0000255" key="3"/>
<evidence type="ECO:0000269" key="4">
    <source>
    </source>
</evidence>
<evidence type="ECO:0000269" key="5">
    <source>
    </source>
</evidence>
<evidence type="ECO:0000303" key="6">
    <source>
    </source>
</evidence>
<evidence type="ECO:0000305" key="7"/>
<evidence type="ECO:0000305" key="8">
    <source>
    </source>
</evidence>
<evidence type="ECO:0000312" key="9">
    <source>
        <dbReference type="Araport" id="AT2G21370"/>
    </source>
</evidence>
<evidence type="ECO:0000312" key="10">
    <source>
        <dbReference type="EMBL" id="AAD23698.1"/>
    </source>
</evidence>
<evidence type="ECO:0007744" key="11">
    <source>
        <dbReference type="PDB" id="5HTV"/>
    </source>
</evidence>
<evidence type="ECO:0007744" key="12">
    <source>
        <dbReference type="PDB" id="5HTX"/>
    </source>
</evidence>
<evidence type="ECO:0007829" key="13">
    <source>
        <dbReference type="PDB" id="5HTX"/>
    </source>
</evidence>
<organism>
    <name type="scientific">Arabidopsis thaliana</name>
    <name type="common">Mouse-ear cress</name>
    <dbReference type="NCBI Taxonomy" id="3702"/>
    <lineage>
        <taxon>Eukaryota</taxon>
        <taxon>Viridiplantae</taxon>
        <taxon>Streptophyta</taxon>
        <taxon>Embryophyta</taxon>
        <taxon>Tracheophyta</taxon>
        <taxon>Spermatophyta</taxon>
        <taxon>Magnoliopsida</taxon>
        <taxon>eudicotyledons</taxon>
        <taxon>Gunneridae</taxon>
        <taxon>Pentapetalae</taxon>
        <taxon>rosids</taxon>
        <taxon>malvids</taxon>
        <taxon>Brassicales</taxon>
        <taxon>Brassicaceae</taxon>
        <taxon>Camelineae</taxon>
        <taxon>Arabidopsis</taxon>
    </lineage>
</organism>
<gene>
    <name evidence="6" type="primary">XK1</name>
    <name evidence="6" type="synonym">XK-1</name>
    <name evidence="9" type="ordered locus">At2g21370</name>
    <name evidence="10" type="ORF">F3K23.13</name>
</gene>